<accession>A6NDX5</accession>
<accession>Q6KAL7</accession>
<evidence type="ECO:0000250" key="1"/>
<evidence type="ECO:0000255" key="2">
    <source>
        <dbReference type="PROSITE-ProRule" id="PRU00042"/>
    </source>
</evidence>
<evidence type="ECO:0000255" key="3">
    <source>
        <dbReference type="PROSITE-ProRule" id="PRU00119"/>
    </source>
</evidence>
<evidence type="ECO:0000256" key="4">
    <source>
        <dbReference type="SAM" id="MobiDB-lite"/>
    </source>
</evidence>
<evidence type="ECO:0000305" key="5"/>
<feature type="chain" id="PRO_0000332148" description="Zinc finger protein 840">
    <location>
        <begin position="1"/>
        <end position="716"/>
    </location>
</feature>
<feature type="domain" description="KRAB" evidence="3">
    <location>
        <begin position="42"/>
        <end position="113"/>
    </location>
</feature>
<feature type="zinc finger region" description="C2H2-type 1" evidence="2">
    <location>
        <begin position="151"/>
        <end position="173"/>
    </location>
</feature>
<feature type="zinc finger region" description="C2H2-type 2" evidence="2">
    <location>
        <begin position="207"/>
        <end position="229"/>
    </location>
</feature>
<feature type="zinc finger region" description="C2H2-type 3" evidence="2">
    <location>
        <begin position="235"/>
        <end position="257"/>
    </location>
</feature>
<feature type="zinc finger region" description="C2H2-type 4" evidence="2">
    <location>
        <begin position="277"/>
        <end position="299"/>
    </location>
</feature>
<feature type="zinc finger region" description="C2H2-type 5" evidence="2">
    <location>
        <begin position="305"/>
        <end position="327"/>
    </location>
</feature>
<feature type="zinc finger region" description="C2H2-type 6" evidence="2">
    <location>
        <begin position="333"/>
        <end position="355"/>
    </location>
</feature>
<feature type="zinc finger region" description="C2H2-type 7" evidence="2">
    <location>
        <begin position="361"/>
        <end position="383"/>
    </location>
</feature>
<feature type="zinc finger region" description="C2H2-type 8" evidence="2">
    <location>
        <begin position="389"/>
        <end position="411"/>
    </location>
</feature>
<feature type="zinc finger region" description="C2H2-type 9" evidence="2">
    <location>
        <begin position="417"/>
        <end position="439"/>
    </location>
</feature>
<feature type="zinc finger region" description="C2H2-type 10" evidence="2">
    <location>
        <begin position="445"/>
        <end position="467"/>
    </location>
</feature>
<feature type="zinc finger region" description="C2H2-type 11" evidence="2">
    <location>
        <begin position="473"/>
        <end position="495"/>
    </location>
</feature>
<feature type="zinc finger region" description="C2H2-type 12" evidence="2">
    <location>
        <begin position="501"/>
        <end position="523"/>
    </location>
</feature>
<feature type="zinc finger region" description="C2H2-type 13" evidence="2">
    <location>
        <begin position="549"/>
        <end position="571"/>
    </location>
</feature>
<feature type="zinc finger region" description="C2H2-type 14" evidence="2">
    <location>
        <begin position="577"/>
        <end position="599"/>
    </location>
</feature>
<feature type="zinc finger region" description="C2H2-type 15" evidence="2">
    <location>
        <begin position="605"/>
        <end position="627"/>
    </location>
</feature>
<feature type="zinc finger region" description="C2H2-type 16" evidence="2">
    <location>
        <begin position="633"/>
        <end position="655"/>
    </location>
</feature>
<feature type="zinc finger region" description="C2H2-type 17" evidence="2">
    <location>
        <begin position="661"/>
        <end position="683"/>
    </location>
</feature>
<feature type="zinc finger region" description="C2H2-type 18" evidence="2">
    <location>
        <begin position="689"/>
        <end position="711"/>
    </location>
</feature>
<feature type="region of interest" description="Disordered" evidence="4">
    <location>
        <begin position="515"/>
        <end position="548"/>
    </location>
</feature>
<feature type="sequence variant" id="VAR_048027" description="In dbSNP:rs3752261.">
    <original>Y</original>
    <variation>C</variation>
    <location>
        <position position="181"/>
    </location>
</feature>
<keyword id="KW-0238">DNA-binding</keyword>
<keyword id="KW-0479">Metal-binding</keyword>
<keyword id="KW-0539">Nucleus</keyword>
<keyword id="KW-1267">Proteomics identification</keyword>
<keyword id="KW-1185">Reference proteome</keyword>
<keyword id="KW-0677">Repeat</keyword>
<keyword id="KW-0804">Transcription</keyword>
<keyword id="KW-0805">Transcription regulation</keyword>
<keyword id="KW-0862">Zinc</keyword>
<keyword id="KW-0863">Zinc-finger</keyword>
<proteinExistence type="evidence at protein level"/>
<protein>
    <recommendedName>
        <fullName>Zinc finger protein 840</fullName>
    </recommendedName>
</protein>
<comment type="function">
    <text evidence="1">May be involved in transcriptional regulation.</text>
</comment>
<comment type="subcellular location">
    <subcellularLocation>
        <location evidence="1">Nucleus</location>
    </subcellularLocation>
</comment>
<comment type="similarity">
    <text evidence="5">Belongs to the krueppel C2H2-type zinc-finger protein family.</text>
</comment>
<organism>
    <name type="scientific">Homo sapiens</name>
    <name type="common">Human</name>
    <dbReference type="NCBI Taxonomy" id="9606"/>
    <lineage>
        <taxon>Eukaryota</taxon>
        <taxon>Metazoa</taxon>
        <taxon>Chordata</taxon>
        <taxon>Craniata</taxon>
        <taxon>Vertebrata</taxon>
        <taxon>Euteleostomi</taxon>
        <taxon>Mammalia</taxon>
        <taxon>Eutheria</taxon>
        <taxon>Euarchontoglires</taxon>
        <taxon>Primates</taxon>
        <taxon>Haplorrhini</taxon>
        <taxon>Catarrhini</taxon>
        <taxon>Hominidae</taxon>
        <taxon>Homo</taxon>
    </lineage>
</organism>
<sequence length="716" mass="83235">MSLMGHGKVEMLLYAVPLLKAPNCLSSSMQLPHGGGRHQELVRFRDVAVVFSPEEWDHLTPEQRNLYKDVMLDNCKYLASLGNWTYKAHVMSSLKQGKEPWMMEREVTGDPCPACQPALATFRALNESGNAFRQSFHHGEYRTHRTFVQHYECDDCGMAFGHVSQLTGHQKIHKVGETHEYGENTRGFRHRSSFTMLQRICTLYKHFECNQCGETFNRPSKVIQHQSMHSGLKPYKCDVCQKAFRFLSSLSIHQRFHVGNRVNLTRHQKTHTQRKPFSCNFCGKTFHRFSEKTQHLLIHTRKKYYTCNYCKKEFNPYSKFILHQRTHTGEKPHKCDVCEKSFKSISNLNKHQKTHTGEKPFSCNECKKTFAQRTDLARHQQIHTGKKSFICSSCKKTFVRLSDLTQHKGTHTGERPYQCTTCEKAFKYRSNFTKHQKTHSIGRPFACNECGKTYRLNWELNQHKKIHTGEKPYECGECGKRFNNNSNLNKHKKIHTGEKHFVCNQCGKAFSLNSKLSRHQRTHNKKENSSKSVSNLNKHQKTHAGEKPFPCNECKKAFAQRMDLARHQQIHTGRKPFICSSCKKTFVRLSDLTQHKGTHTGERPYQCTTCEKAFKYQSNFTKHQKTHSIGRPFTCNECGKTFRLNWKLNQHKKIHTGEKPYECGECGKCFNNNSNLSKHKKIHTGEKHFVCNQCGKAFSLNSKLSRHQITHNKKKP</sequence>
<reference key="1">
    <citation type="journal article" date="2001" name="Nature">
        <title>The DNA sequence and comparative analysis of human chromosome 20.</title>
        <authorList>
            <person name="Deloukas P."/>
            <person name="Matthews L.H."/>
            <person name="Ashurst J.L."/>
            <person name="Burton J."/>
            <person name="Gilbert J.G.R."/>
            <person name="Jones M."/>
            <person name="Stavrides G."/>
            <person name="Almeida J.P."/>
            <person name="Babbage A.K."/>
            <person name="Bagguley C.L."/>
            <person name="Bailey J."/>
            <person name="Barlow K.F."/>
            <person name="Bates K.N."/>
            <person name="Beard L.M."/>
            <person name="Beare D.M."/>
            <person name="Beasley O.P."/>
            <person name="Bird C.P."/>
            <person name="Blakey S.E."/>
            <person name="Bridgeman A.M."/>
            <person name="Brown A.J."/>
            <person name="Buck D."/>
            <person name="Burrill W.D."/>
            <person name="Butler A.P."/>
            <person name="Carder C."/>
            <person name="Carter N.P."/>
            <person name="Chapman J.C."/>
            <person name="Clamp M."/>
            <person name="Clark G."/>
            <person name="Clark L.N."/>
            <person name="Clark S.Y."/>
            <person name="Clee C.M."/>
            <person name="Clegg S."/>
            <person name="Cobley V.E."/>
            <person name="Collier R.E."/>
            <person name="Connor R.E."/>
            <person name="Corby N.R."/>
            <person name="Coulson A."/>
            <person name="Coville G.J."/>
            <person name="Deadman R."/>
            <person name="Dhami P.D."/>
            <person name="Dunn M."/>
            <person name="Ellington A.G."/>
            <person name="Frankland J.A."/>
            <person name="Fraser A."/>
            <person name="French L."/>
            <person name="Garner P."/>
            <person name="Grafham D.V."/>
            <person name="Griffiths C."/>
            <person name="Griffiths M.N.D."/>
            <person name="Gwilliam R."/>
            <person name="Hall R.E."/>
            <person name="Hammond S."/>
            <person name="Harley J.L."/>
            <person name="Heath P.D."/>
            <person name="Ho S."/>
            <person name="Holden J.L."/>
            <person name="Howden P.J."/>
            <person name="Huckle E."/>
            <person name="Hunt A.R."/>
            <person name="Hunt S.E."/>
            <person name="Jekosch K."/>
            <person name="Johnson C.M."/>
            <person name="Johnson D."/>
            <person name="Kay M.P."/>
            <person name="Kimberley A.M."/>
            <person name="King A."/>
            <person name="Knights A."/>
            <person name="Laird G.K."/>
            <person name="Lawlor S."/>
            <person name="Lehvaeslaiho M.H."/>
            <person name="Leversha M.A."/>
            <person name="Lloyd C."/>
            <person name="Lloyd D.M."/>
            <person name="Lovell J.D."/>
            <person name="Marsh V.L."/>
            <person name="Martin S.L."/>
            <person name="McConnachie L.J."/>
            <person name="McLay K."/>
            <person name="McMurray A.A."/>
            <person name="Milne S.A."/>
            <person name="Mistry D."/>
            <person name="Moore M.J.F."/>
            <person name="Mullikin J.C."/>
            <person name="Nickerson T."/>
            <person name="Oliver K."/>
            <person name="Parker A."/>
            <person name="Patel R."/>
            <person name="Pearce T.A.V."/>
            <person name="Peck A.I."/>
            <person name="Phillimore B.J.C.T."/>
            <person name="Prathalingam S.R."/>
            <person name="Plumb R.W."/>
            <person name="Ramsay H."/>
            <person name="Rice C.M."/>
            <person name="Ross M.T."/>
            <person name="Scott C.E."/>
            <person name="Sehra H.K."/>
            <person name="Shownkeen R."/>
            <person name="Sims S."/>
            <person name="Skuce C.D."/>
            <person name="Smith M.L."/>
            <person name="Soderlund C."/>
            <person name="Steward C.A."/>
            <person name="Sulston J.E."/>
            <person name="Swann R.M."/>
            <person name="Sycamore N."/>
            <person name="Taylor R."/>
            <person name="Tee L."/>
            <person name="Thomas D.W."/>
            <person name="Thorpe A."/>
            <person name="Tracey A."/>
            <person name="Tromans A.C."/>
            <person name="Vaudin M."/>
            <person name="Wall M."/>
            <person name="Wallis J.M."/>
            <person name="Whitehead S.L."/>
            <person name="Whittaker P."/>
            <person name="Willey D.L."/>
            <person name="Williams L."/>
            <person name="Williams S.A."/>
            <person name="Wilming L."/>
            <person name="Wray P.W."/>
            <person name="Hubbard T."/>
            <person name="Durbin R.M."/>
            <person name="Bentley D.R."/>
            <person name="Beck S."/>
            <person name="Rogers J."/>
        </authorList>
    </citation>
    <scope>NUCLEOTIDE SEQUENCE [LARGE SCALE GENOMIC DNA]</scope>
</reference>
<dbReference type="EMBL" id="AL031686">
    <property type="status" value="NOT_ANNOTATED_CDS"/>
    <property type="molecule type" value="Genomic_DNA"/>
</dbReference>
<dbReference type="SMR" id="A6NDX5"/>
<dbReference type="IntAct" id="A6NDX5">
    <property type="interactions" value="1"/>
</dbReference>
<dbReference type="iPTMnet" id="A6NDX5"/>
<dbReference type="PhosphoSitePlus" id="A6NDX5"/>
<dbReference type="BioMuta" id="HGNC:34344"/>
<dbReference type="jPOST" id="A6NDX5"/>
<dbReference type="MassIVE" id="A6NDX5"/>
<dbReference type="PeptideAtlas" id="A6NDX5"/>
<dbReference type="ProteomicsDB" id="939"/>
<dbReference type="AGR" id="HGNC:34344"/>
<dbReference type="GeneCards" id="ZNF840P"/>
<dbReference type="HGNC" id="HGNC:34344">
    <property type="gene designation" value="ZNF840P"/>
</dbReference>
<dbReference type="neXtProt" id="NX_A6NDX5"/>
<dbReference type="InParanoid" id="A6NDX5"/>
<dbReference type="PAN-GO" id="A6NDX5">
    <property type="GO annotations" value="4 GO annotations based on evolutionary models"/>
</dbReference>
<dbReference type="PhylomeDB" id="A6NDX5"/>
<dbReference type="PathwayCommons" id="A6NDX5"/>
<dbReference type="Reactome" id="R-HSA-212436">
    <property type="pathway name" value="Generic Transcription Pathway"/>
</dbReference>
<dbReference type="SignaLink" id="A6NDX5"/>
<dbReference type="Pharos" id="A6NDX5">
    <property type="development level" value="Tdark"/>
</dbReference>
<dbReference type="Proteomes" id="UP000005640">
    <property type="component" value="Unplaced"/>
</dbReference>
<dbReference type="RNAct" id="A6NDX5">
    <property type="molecule type" value="protein"/>
</dbReference>
<dbReference type="GO" id="GO:0005634">
    <property type="term" value="C:nucleus"/>
    <property type="evidence" value="ECO:0000318"/>
    <property type="project" value="GO_Central"/>
</dbReference>
<dbReference type="GO" id="GO:0003677">
    <property type="term" value="F:DNA binding"/>
    <property type="evidence" value="ECO:0007669"/>
    <property type="project" value="UniProtKB-KW"/>
</dbReference>
<dbReference type="GO" id="GO:0008270">
    <property type="term" value="F:zinc ion binding"/>
    <property type="evidence" value="ECO:0007669"/>
    <property type="project" value="UniProtKB-KW"/>
</dbReference>
<dbReference type="GO" id="GO:0006357">
    <property type="term" value="P:regulation of transcription by RNA polymerase II"/>
    <property type="evidence" value="ECO:0000318"/>
    <property type="project" value="GO_Central"/>
</dbReference>
<dbReference type="CDD" id="cd07765">
    <property type="entry name" value="KRAB_A-box"/>
    <property type="match status" value="1"/>
</dbReference>
<dbReference type="FunFam" id="3.30.160.60:FF:000446">
    <property type="entry name" value="Zinc finger protein"/>
    <property type="match status" value="1"/>
</dbReference>
<dbReference type="FunFam" id="3.30.160.60:FF:000478">
    <property type="entry name" value="Zinc finger protein 133"/>
    <property type="match status" value="1"/>
</dbReference>
<dbReference type="FunFam" id="3.30.160.60:FF:000608">
    <property type="entry name" value="zinc finger protein 286A isoform X1"/>
    <property type="match status" value="1"/>
</dbReference>
<dbReference type="FunFam" id="3.30.160.60:FF:002343">
    <property type="entry name" value="Zinc finger protein 33A"/>
    <property type="match status" value="2"/>
</dbReference>
<dbReference type="FunFam" id="3.30.160.60:FF:000060">
    <property type="entry name" value="zinc finger protein 436"/>
    <property type="match status" value="2"/>
</dbReference>
<dbReference type="FunFam" id="3.30.160.60:FF:000384">
    <property type="entry name" value="Zinc finger protein 550"/>
    <property type="match status" value="1"/>
</dbReference>
<dbReference type="FunFam" id="3.30.160.60:FF:000281">
    <property type="entry name" value="Zinc finger protein 558 isoform X1"/>
    <property type="match status" value="1"/>
</dbReference>
<dbReference type="FunFam" id="3.30.160.60:FF:000202">
    <property type="entry name" value="Zinc finger protein 574"/>
    <property type="match status" value="1"/>
</dbReference>
<dbReference type="FunFam" id="3.30.160.60:FF:000495">
    <property type="entry name" value="zinc finger protein 668"/>
    <property type="match status" value="2"/>
</dbReference>
<dbReference type="FunFam" id="3.30.160.60:FF:000624">
    <property type="entry name" value="zinc finger protein 697"/>
    <property type="match status" value="2"/>
</dbReference>
<dbReference type="FunFam" id="3.30.160.60:FF:000176">
    <property type="entry name" value="zinc finger protein 70"/>
    <property type="match status" value="1"/>
</dbReference>
<dbReference type="Gene3D" id="6.10.140.140">
    <property type="match status" value="1"/>
</dbReference>
<dbReference type="Gene3D" id="3.30.160.60">
    <property type="entry name" value="Classic Zinc Finger"/>
    <property type="match status" value="18"/>
</dbReference>
<dbReference type="InterPro" id="IPR001909">
    <property type="entry name" value="KRAB"/>
</dbReference>
<dbReference type="InterPro" id="IPR036051">
    <property type="entry name" value="KRAB_dom_sf"/>
</dbReference>
<dbReference type="InterPro" id="IPR050758">
    <property type="entry name" value="Znf_C2H2-type"/>
</dbReference>
<dbReference type="InterPro" id="IPR036236">
    <property type="entry name" value="Znf_C2H2_sf"/>
</dbReference>
<dbReference type="InterPro" id="IPR013087">
    <property type="entry name" value="Znf_C2H2_type"/>
</dbReference>
<dbReference type="PANTHER" id="PTHR23234:SF10">
    <property type="entry name" value="RIKEN CDNA 6720489N17 GENE-RELATED"/>
    <property type="match status" value="1"/>
</dbReference>
<dbReference type="PANTHER" id="PTHR23234">
    <property type="entry name" value="ZNF44 PROTEIN"/>
    <property type="match status" value="1"/>
</dbReference>
<dbReference type="Pfam" id="PF01352">
    <property type="entry name" value="KRAB"/>
    <property type="match status" value="1"/>
</dbReference>
<dbReference type="Pfam" id="PF00096">
    <property type="entry name" value="zf-C2H2"/>
    <property type="match status" value="14"/>
</dbReference>
<dbReference type="Pfam" id="PF13912">
    <property type="entry name" value="zf-C2H2_6"/>
    <property type="match status" value="3"/>
</dbReference>
<dbReference type="SMART" id="SM00349">
    <property type="entry name" value="KRAB"/>
    <property type="match status" value="1"/>
</dbReference>
<dbReference type="SMART" id="SM00355">
    <property type="entry name" value="ZnF_C2H2"/>
    <property type="match status" value="18"/>
</dbReference>
<dbReference type="SUPFAM" id="SSF57667">
    <property type="entry name" value="beta-beta-alpha zinc fingers"/>
    <property type="match status" value="10"/>
</dbReference>
<dbReference type="SUPFAM" id="SSF109640">
    <property type="entry name" value="KRAB domain (Kruppel-associated box)"/>
    <property type="match status" value="1"/>
</dbReference>
<dbReference type="PROSITE" id="PS50805">
    <property type="entry name" value="KRAB"/>
    <property type="match status" value="1"/>
</dbReference>
<dbReference type="PROSITE" id="PS00028">
    <property type="entry name" value="ZINC_FINGER_C2H2_1"/>
    <property type="match status" value="18"/>
</dbReference>
<dbReference type="PROSITE" id="PS50157">
    <property type="entry name" value="ZINC_FINGER_C2H2_2"/>
    <property type="match status" value="18"/>
</dbReference>
<gene>
    <name type="primary">ZNF840P</name>
    <name type="synonym">C20orf157</name>
    <name type="synonym">ZNF840</name>
</gene>
<name>ZN840_HUMAN</name>